<organism>
    <name type="scientific">Acidianus bottle-shaped virus (isolate Italy/Pozzuoli)</name>
    <name type="common">ABV</name>
    <dbReference type="NCBI Taxonomy" id="654911"/>
    <lineage>
        <taxon>Viruses</taxon>
        <taxon>Viruses incertae sedis</taxon>
        <taxon>Ampullaviridae</taxon>
        <taxon>Bottigliavirus</taxon>
        <taxon>Bottigliavirus ABV</taxon>
    </lineage>
</organism>
<feature type="chain" id="PRO_0000384862" description="Uncharacterized protein ORF167">
    <location>
        <begin position="1"/>
        <end position="167"/>
    </location>
</feature>
<proteinExistence type="predicted"/>
<keyword id="KW-1185">Reference proteome</keyword>
<reference key="1">
    <citation type="journal article" date="2007" name="Virology">
        <title>Genome of the Acidianus bottle-shaped virus and insights into the replication and packaging mechanisms.</title>
        <authorList>
            <person name="Peng X."/>
            <person name="Basta T."/>
            <person name="Haring M."/>
            <person name="Garrett R.A."/>
            <person name="Prangishvili D."/>
        </authorList>
    </citation>
    <scope>NUCLEOTIDE SEQUENCE [GENOMIC DNA]</scope>
</reference>
<organismHost>
    <name type="scientific">Acidianus convivator</name>
    <dbReference type="NCBI Taxonomy" id="269667"/>
</organismHost>
<dbReference type="EMBL" id="EF432053">
    <property type="protein sequence ID" value="ABP73425.1"/>
    <property type="molecule type" value="Genomic_DNA"/>
</dbReference>
<dbReference type="RefSeq" id="YP_001210339.1">
    <property type="nucleotide sequence ID" value="NC_009452.1"/>
</dbReference>
<dbReference type="GeneID" id="5129813"/>
<dbReference type="KEGG" id="vg:5129813"/>
<dbReference type="Proteomes" id="UP000000513">
    <property type="component" value="Segment"/>
</dbReference>
<gene>
    <name type="ORF">ORF167</name>
</gene>
<protein>
    <recommendedName>
        <fullName>Uncharacterized protein ORF167</fullName>
    </recommendedName>
</protein>
<sequence length="167" mass="18787">MSHKQGGHKTKGLVFPSNWTGKWLYRAIINTPKWQLNSVLNSYKFNQWIAFESMQLNGLQLSPRVSPETNFIRSVEVGIAVSEAGKQYESVPHKVPLEDKVRLLKEELEVPIIGDMVRSMTQAVLPGPMPVMYPNTAEVETPVEIKGKEIPIEFKEEGKEIPVMAVG</sequence>
<name>Y167_ABVP</name>
<accession>A4ZUC1</accession>